<gene>
    <name evidence="1" type="primary">prfB</name>
    <name type="ordered locus">CPS_4083</name>
</gene>
<keyword id="KW-0963">Cytoplasm</keyword>
<keyword id="KW-0488">Methylation</keyword>
<keyword id="KW-0648">Protein biosynthesis</keyword>
<sequence length="365" mass="41114">MFETNPILSKLKEIRERANLLRGYLDYDVKAERLVEVSRELELPDVWNEPERAQALGKERSSLEEVVNTIVELETGCEDIEGLVELAVEESDQETFDDAEVEADALDKVLEKLEFRRMFSGEQDANNSYLDIQSGSGGTEAQDWAEMLMRMYLRWGEAHGYKTEVIEVTDGDVAGIKGCTIKYTGEYAYGWLRTETGVHRLVRKSPFDSSGRRHTSFASAFIYPEIDDNIEIDINPADLRIDTFRASGAGGQHVNKTDSAIRITHEPTGAVVACQADRSQHKNRATAMKLLKAKLYEMEMQKQNSDKQVLEDGKSDIGWGSQIRSYVLDDSRIKDLRTGVENRNTQAVLDGDLDKFLEASLKSGL</sequence>
<proteinExistence type="inferred from homology"/>
<reference key="1">
    <citation type="journal article" date="2005" name="Proc. Natl. Acad. Sci. U.S.A.">
        <title>The psychrophilic lifestyle as revealed by the genome sequence of Colwellia psychrerythraea 34H through genomic and proteomic analyses.</title>
        <authorList>
            <person name="Methe B.A."/>
            <person name="Nelson K.E."/>
            <person name="Deming J.W."/>
            <person name="Momen B."/>
            <person name="Melamud E."/>
            <person name="Zhang X."/>
            <person name="Moult J."/>
            <person name="Madupu R."/>
            <person name="Nelson W.C."/>
            <person name="Dodson R.J."/>
            <person name="Brinkac L.M."/>
            <person name="Daugherty S.C."/>
            <person name="Durkin A.S."/>
            <person name="DeBoy R.T."/>
            <person name="Kolonay J.F."/>
            <person name="Sullivan S.A."/>
            <person name="Zhou L."/>
            <person name="Davidsen T.M."/>
            <person name="Wu M."/>
            <person name="Huston A.L."/>
            <person name="Lewis M."/>
            <person name="Weaver B."/>
            <person name="Weidman J.F."/>
            <person name="Khouri H."/>
            <person name="Utterback T.R."/>
            <person name="Feldblyum T.V."/>
            <person name="Fraser C.M."/>
        </authorList>
    </citation>
    <scope>NUCLEOTIDE SEQUENCE [LARGE SCALE GENOMIC DNA]</scope>
    <source>
        <strain>34H / ATCC BAA-681</strain>
    </source>
</reference>
<comment type="function">
    <text evidence="1">Peptide chain release factor 2 directs the termination of translation in response to the peptide chain termination codons UGA and UAA.</text>
</comment>
<comment type="subcellular location">
    <subcellularLocation>
        <location evidence="1">Cytoplasm</location>
    </subcellularLocation>
</comment>
<comment type="PTM">
    <text evidence="1">Methylated by PrmC. Methylation increases the termination efficiency of RF2.</text>
</comment>
<comment type="similarity">
    <text evidence="1">Belongs to the prokaryotic/mitochondrial release factor family.</text>
</comment>
<name>RF2_COLP3</name>
<accession>Q47WT4</accession>
<organism>
    <name type="scientific">Colwellia psychrerythraea (strain 34H / ATCC BAA-681)</name>
    <name type="common">Vibrio psychroerythus</name>
    <dbReference type="NCBI Taxonomy" id="167879"/>
    <lineage>
        <taxon>Bacteria</taxon>
        <taxon>Pseudomonadati</taxon>
        <taxon>Pseudomonadota</taxon>
        <taxon>Gammaproteobacteria</taxon>
        <taxon>Alteromonadales</taxon>
        <taxon>Colwelliaceae</taxon>
        <taxon>Colwellia</taxon>
    </lineage>
</organism>
<evidence type="ECO:0000255" key="1">
    <source>
        <dbReference type="HAMAP-Rule" id="MF_00094"/>
    </source>
</evidence>
<feature type="chain" id="PRO_1000004985" description="Peptide chain release factor 2">
    <location>
        <begin position="1"/>
        <end position="365"/>
    </location>
</feature>
<feature type="modified residue" description="N5-methylglutamine" evidence="1">
    <location>
        <position position="252"/>
    </location>
</feature>
<protein>
    <recommendedName>
        <fullName evidence="1">Peptide chain release factor 2</fullName>
        <shortName evidence="1">RF-2</shortName>
    </recommendedName>
</protein>
<dbReference type="EMBL" id="CP000083">
    <property type="protein sequence ID" value="AAZ27880.1"/>
    <property type="molecule type" value="Genomic_DNA"/>
</dbReference>
<dbReference type="SMR" id="Q47WT4"/>
<dbReference type="STRING" id="167879.CPS_4083"/>
<dbReference type="KEGG" id="cps:CPS_4083"/>
<dbReference type="eggNOG" id="COG1186">
    <property type="taxonomic scope" value="Bacteria"/>
</dbReference>
<dbReference type="HOGENOM" id="CLU_220733_2_1_6"/>
<dbReference type="Proteomes" id="UP000000547">
    <property type="component" value="Chromosome"/>
</dbReference>
<dbReference type="GO" id="GO:0005737">
    <property type="term" value="C:cytoplasm"/>
    <property type="evidence" value="ECO:0007669"/>
    <property type="project" value="UniProtKB-SubCell"/>
</dbReference>
<dbReference type="GO" id="GO:0016149">
    <property type="term" value="F:translation release factor activity, codon specific"/>
    <property type="evidence" value="ECO:0007669"/>
    <property type="project" value="UniProtKB-UniRule"/>
</dbReference>
<dbReference type="FunFam" id="3.30.160.20:FF:000010">
    <property type="entry name" value="Peptide chain release factor 2"/>
    <property type="match status" value="1"/>
</dbReference>
<dbReference type="Gene3D" id="3.30.160.20">
    <property type="match status" value="1"/>
</dbReference>
<dbReference type="Gene3D" id="3.30.70.1660">
    <property type="match status" value="1"/>
</dbReference>
<dbReference type="Gene3D" id="1.20.58.410">
    <property type="entry name" value="Release factor"/>
    <property type="match status" value="1"/>
</dbReference>
<dbReference type="HAMAP" id="MF_00094">
    <property type="entry name" value="Rel_fac_2"/>
    <property type="match status" value="1"/>
</dbReference>
<dbReference type="InterPro" id="IPR005139">
    <property type="entry name" value="PCRF"/>
</dbReference>
<dbReference type="InterPro" id="IPR000352">
    <property type="entry name" value="Pep_chain_release_fac_I"/>
</dbReference>
<dbReference type="InterPro" id="IPR045853">
    <property type="entry name" value="Pep_chain_release_fac_I_sf"/>
</dbReference>
<dbReference type="InterPro" id="IPR004374">
    <property type="entry name" value="PrfB"/>
</dbReference>
<dbReference type="NCBIfam" id="TIGR00020">
    <property type="entry name" value="prfB"/>
    <property type="match status" value="1"/>
</dbReference>
<dbReference type="PANTHER" id="PTHR43116:SF3">
    <property type="entry name" value="CLASS I PEPTIDE CHAIN RELEASE FACTOR"/>
    <property type="match status" value="1"/>
</dbReference>
<dbReference type="PANTHER" id="PTHR43116">
    <property type="entry name" value="PEPTIDE CHAIN RELEASE FACTOR 2"/>
    <property type="match status" value="1"/>
</dbReference>
<dbReference type="Pfam" id="PF03462">
    <property type="entry name" value="PCRF"/>
    <property type="match status" value="1"/>
</dbReference>
<dbReference type="Pfam" id="PF00472">
    <property type="entry name" value="RF-1"/>
    <property type="match status" value="1"/>
</dbReference>
<dbReference type="SMART" id="SM00937">
    <property type="entry name" value="PCRF"/>
    <property type="match status" value="1"/>
</dbReference>
<dbReference type="SUPFAM" id="SSF75620">
    <property type="entry name" value="Release factor"/>
    <property type="match status" value="1"/>
</dbReference>
<dbReference type="PROSITE" id="PS00745">
    <property type="entry name" value="RF_PROK_I"/>
    <property type="match status" value="1"/>
</dbReference>